<keyword id="KW-0021">Allosteric enzyme</keyword>
<keyword id="KW-0067">ATP-binding</keyword>
<keyword id="KW-0963">Cytoplasm</keyword>
<keyword id="KW-0418">Kinase</keyword>
<keyword id="KW-0547">Nucleotide-binding</keyword>
<keyword id="KW-0665">Pyrimidine biosynthesis</keyword>
<keyword id="KW-0808">Transferase</keyword>
<name>PYRH_SHIBS</name>
<sequence>MATNAKPVYKRILLKLSGEALQGTEGFGIDASILDRMAQEIKELVELGIQVGVVIGGGNLFRGAGLAKAGMNRVVGDHMGMLATVMNGLAMRDALHRAYVNARLMSAIPLNGVCDSYSWAEAISLLRNNRVVILSAGTGNPFFTTDSAACLRGIEIEADVVLKATKVDGVFTADPAKDPTATMYEQLTYSEVLEKELKVMDLAAFTLARDHKLPIRVFNMNKPGALRRVVMGEKEGTLITE</sequence>
<dbReference type="EC" id="2.7.4.22" evidence="1"/>
<dbReference type="EMBL" id="CP000036">
    <property type="protein sequence ID" value="ABB64889.1"/>
    <property type="molecule type" value="Genomic_DNA"/>
</dbReference>
<dbReference type="RefSeq" id="WP_000224573.1">
    <property type="nucleotide sequence ID" value="NC_007613.1"/>
</dbReference>
<dbReference type="SMR" id="Q325W9"/>
<dbReference type="GeneID" id="93777254"/>
<dbReference type="KEGG" id="sbo:SBO_0159"/>
<dbReference type="HOGENOM" id="CLU_033861_0_0_6"/>
<dbReference type="UniPathway" id="UPA00159">
    <property type="reaction ID" value="UER00275"/>
</dbReference>
<dbReference type="Proteomes" id="UP000007067">
    <property type="component" value="Chromosome"/>
</dbReference>
<dbReference type="GO" id="GO:0005829">
    <property type="term" value="C:cytosol"/>
    <property type="evidence" value="ECO:0007669"/>
    <property type="project" value="TreeGrafter"/>
</dbReference>
<dbReference type="GO" id="GO:0005524">
    <property type="term" value="F:ATP binding"/>
    <property type="evidence" value="ECO:0007669"/>
    <property type="project" value="UniProtKB-KW"/>
</dbReference>
<dbReference type="GO" id="GO:0033862">
    <property type="term" value="F:UMP kinase activity"/>
    <property type="evidence" value="ECO:0007669"/>
    <property type="project" value="UniProtKB-EC"/>
</dbReference>
<dbReference type="GO" id="GO:0044210">
    <property type="term" value="P:'de novo' CTP biosynthetic process"/>
    <property type="evidence" value="ECO:0007669"/>
    <property type="project" value="UniProtKB-UniRule"/>
</dbReference>
<dbReference type="GO" id="GO:0006225">
    <property type="term" value="P:UDP biosynthetic process"/>
    <property type="evidence" value="ECO:0007669"/>
    <property type="project" value="TreeGrafter"/>
</dbReference>
<dbReference type="CDD" id="cd04254">
    <property type="entry name" value="AAK_UMPK-PyrH-Ec"/>
    <property type="match status" value="1"/>
</dbReference>
<dbReference type="FunFam" id="3.40.1160.10:FF:000001">
    <property type="entry name" value="Uridylate kinase"/>
    <property type="match status" value="1"/>
</dbReference>
<dbReference type="Gene3D" id="3.40.1160.10">
    <property type="entry name" value="Acetylglutamate kinase-like"/>
    <property type="match status" value="1"/>
</dbReference>
<dbReference type="HAMAP" id="MF_01220_B">
    <property type="entry name" value="PyrH_B"/>
    <property type="match status" value="1"/>
</dbReference>
<dbReference type="InterPro" id="IPR036393">
    <property type="entry name" value="AceGlu_kinase-like_sf"/>
</dbReference>
<dbReference type="InterPro" id="IPR001048">
    <property type="entry name" value="Asp/Glu/Uridylate_kinase"/>
</dbReference>
<dbReference type="InterPro" id="IPR011817">
    <property type="entry name" value="Uridylate_kinase"/>
</dbReference>
<dbReference type="InterPro" id="IPR015963">
    <property type="entry name" value="Uridylate_kinase_bac"/>
</dbReference>
<dbReference type="NCBIfam" id="TIGR02075">
    <property type="entry name" value="pyrH_bact"/>
    <property type="match status" value="1"/>
</dbReference>
<dbReference type="PANTHER" id="PTHR42833">
    <property type="entry name" value="URIDYLATE KINASE"/>
    <property type="match status" value="1"/>
</dbReference>
<dbReference type="PANTHER" id="PTHR42833:SF4">
    <property type="entry name" value="URIDYLATE KINASE PUMPKIN, CHLOROPLASTIC"/>
    <property type="match status" value="1"/>
</dbReference>
<dbReference type="Pfam" id="PF00696">
    <property type="entry name" value="AA_kinase"/>
    <property type="match status" value="1"/>
</dbReference>
<dbReference type="PIRSF" id="PIRSF005650">
    <property type="entry name" value="Uridylate_kin"/>
    <property type="match status" value="1"/>
</dbReference>
<dbReference type="SUPFAM" id="SSF53633">
    <property type="entry name" value="Carbamate kinase-like"/>
    <property type="match status" value="1"/>
</dbReference>
<gene>
    <name evidence="1" type="primary">pyrH</name>
    <name type="ordered locus">SBO_0159</name>
</gene>
<reference key="1">
    <citation type="journal article" date="2005" name="Nucleic Acids Res.">
        <title>Genome dynamics and diversity of Shigella species, the etiologic agents of bacillary dysentery.</title>
        <authorList>
            <person name="Yang F."/>
            <person name="Yang J."/>
            <person name="Zhang X."/>
            <person name="Chen L."/>
            <person name="Jiang Y."/>
            <person name="Yan Y."/>
            <person name="Tang X."/>
            <person name="Wang J."/>
            <person name="Xiong Z."/>
            <person name="Dong J."/>
            <person name="Xue Y."/>
            <person name="Zhu Y."/>
            <person name="Xu X."/>
            <person name="Sun L."/>
            <person name="Chen S."/>
            <person name="Nie H."/>
            <person name="Peng J."/>
            <person name="Xu J."/>
            <person name="Wang Y."/>
            <person name="Yuan Z."/>
            <person name="Wen Y."/>
            <person name="Yao Z."/>
            <person name="Shen Y."/>
            <person name="Qiang B."/>
            <person name="Hou Y."/>
            <person name="Yu J."/>
            <person name="Jin Q."/>
        </authorList>
    </citation>
    <scope>NUCLEOTIDE SEQUENCE [LARGE SCALE GENOMIC DNA]</scope>
    <source>
        <strain>Sb227</strain>
    </source>
</reference>
<feature type="chain" id="PRO_1000054016" description="Uridylate kinase">
    <location>
        <begin position="1"/>
        <end position="241"/>
    </location>
</feature>
<feature type="region of interest" description="Involved in allosteric activation by GTP" evidence="1">
    <location>
        <begin position="23"/>
        <end position="28"/>
    </location>
</feature>
<feature type="binding site" evidence="1">
    <location>
        <begin position="15"/>
        <end position="18"/>
    </location>
    <ligand>
        <name>ATP</name>
        <dbReference type="ChEBI" id="CHEBI:30616"/>
    </ligand>
</feature>
<feature type="binding site" evidence="1">
    <location>
        <position position="57"/>
    </location>
    <ligand>
        <name>UMP</name>
        <dbReference type="ChEBI" id="CHEBI:57865"/>
    </ligand>
</feature>
<feature type="binding site" evidence="1">
    <location>
        <position position="58"/>
    </location>
    <ligand>
        <name>ATP</name>
        <dbReference type="ChEBI" id="CHEBI:30616"/>
    </ligand>
</feature>
<feature type="binding site" evidence="1">
    <location>
        <position position="62"/>
    </location>
    <ligand>
        <name>ATP</name>
        <dbReference type="ChEBI" id="CHEBI:30616"/>
    </ligand>
</feature>
<feature type="binding site" evidence="1">
    <location>
        <position position="77"/>
    </location>
    <ligand>
        <name>UMP</name>
        <dbReference type="ChEBI" id="CHEBI:57865"/>
    </ligand>
</feature>
<feature type="binding site" evidence="1">
    <location>
        <begin position="138"/>
        <end position="145"/>
    </location>
    <ligand>
        <name>UMP</name>
        <dbReference type="ChEBI" id="CHEBI:57865"/>
    </ligand>
</feature>
<feature type="binding site" evidence="1">
    <location>
        <position position="165"/>
    </location>
    <ligand>
        <name>ATP</name>
        <dbReference type="ChEBI" id="CHEBI:30616"/>
    </ligand>
</feature>
<feature type="binding site" evidence="1">
    <location>
        <position position="171"/>
    </location>
    <ligand>
        <name>ATP</name>
        <dbReference type="ChEBI" id="CHEBI:30616"/>
    </ligand>
</feature>
<feature type="binding site" evidence="1">
    <location>
        <position position="174"/>
    </location>
    <ligand>
        <name>ATP</name>
        <dbReference type="ChEBI" id="CHEBI:30616"/>
    </ligand>
</feature>
<protein>
    <recommendedName>
        <fullName evidence="1">Uridylate kinase</fullName>
        <shortName evidence="1">UK</shortName>
        <ecNumber evidence="1">2.7.4.22</ecNumber>
    </recommendedName>
    <alternativeName>
        <fullName evidence="1">Uridine monophosphate kinase</fullName>
        <shortName evidence="1">UMP kinase</shortName>
        <shortName evidence="1">UMPK</shortName>
    </alternativeName>
</protein>
<organism>
    <name type="scientific">Shigella boydii serotype 4 (strain Sb227)</name>
    <dbReference type="NCBI Taxonomy" id="300268"/>
    <lineage>
        <taxon>Bacteria</taxon>
        <taxon>Pseudomonadati</taxon>
        <taxon>Pseudomonadota</taxon>
        <taxon>Gammaproteobacteria</taxon>
        <taxon>Enterobacterales</taxon>
        <taxon>Enterobacteriaceae</taxon>
        <taxon>Shigella</taxon>
    </lineage>
</organism>
<accession>Q325W9</accession>
<comment type="function">
    <text evidence="1">Catalyzes the reversible phosphorylation of UMP to UDP.</text>
</comment>
<comment type="catalytic activity">
    <reaction evidence="1">
        <text>UMP + ATP = UDP + ADP</text>
        <dbReference type="Rhea" id="RHEA:24400"/>
        <dbReference type="ChEBI" id="CHEBI:30616"/>
        <dbReference type="ChEBI" id="CHEBI:57865"/>
        <dbReference type="ChEBI" id="CHEBI:58223"/>
        <dbReference type="ChEBI" id="CHEBI:456216"/>
        <dbReference type="EC" id="2.7.4.22"/>
    </reaction>
</comment>
<comment type="activity regulation">
    <text evidence="1">Allosterically activated by GTP. Inhibited by UTP.</text>
</comment>
<comment type="pathway">
    <text evidence="1">Pyrimidine metabolism; CTP biosynthesis via de novo pathway; UDP from UMP (UMPK route): step 1/1.</text>
</comment>
<comment type="subunit">
    <text evidence="1">Homohexamer.</text>
</comment>
<comment type="subcellular location">
    <subcellularLocation>
        <location evidence="1">Cytoplasm</location>
    </subcellularLocation>
</comment>
<comment type="similarity">
    <text evidence="1">Belongs to the UMP kinase family.</text>
</comment>
<proteinExistence type="inferred from homology"/>
<evidence type="ECO:0000255" key="1">
    <source>
        <dbReference type="HAMAP-Rule" id="MF_01220"/>
    </source>
</evidence>